<name>Y1120_AQUAE</name>
<proteinExistence type="predicted"/>
<accession>O67200</accession>
<organism>
    <name type="scientific">Aquifex aeolicus (strain VF5)</name>
    <dbReference type="NCBI Taxonomy" id="224324"/>
    <lineage>
        <taxon>Bacteria</taxon>
        <taxon>Pseudomonadati</taxon>
        <taxon>Aquificota</taxon>
        <taxon>Aquificia</taxon>
        <taxon>Aquificales</taxon>
        <taxon>Aquificaceae</taxon>
        <taxon>Aquifex</taxon>
    </lineage>
</organism>
<keyword id="KW-1185">Reference proteome</keyword>
<sequence>MVIRLNNVGRDAYLAPFGGQPAGYKRQGELLGGRNFALHELDLKFALHELLETRGWIWDLHLGFPRVPLGREQYGRTGFDNLESDRTLATLRWTHFTVANVTGRSYGAYLHVRKGNKAKGFKRITWDGFLGIFDGFKGTDQPWDETVRGTDASQYGCNAACLSQLRM</sequence>
<feature type="chain" id="PRO_0000186902" description="Uncharacterized protein aq_1120">
    <location>
        <begin position="1"/>
        <end position="167"/>
    </location>
</feature>
<gene>
    <name type="ordered locus">aq_1120</name>
</gene>
<dbReference type="EMBL" id="AE000657">
    <property type="protein sequence ID" value="AAC07164.1"/>
    <property type="molecule type" value="Genomic_DNA"/>
</dbReference>
<dbReference type="PIR" id="E70396">
    <property type="entry name" value="E70396"/>
</dbReference>
<dbReference type="RefSeq" id="NP_213764.1">
    <property type="nucleotide sequence ID" value="NC_000918.1"/>
</dbReference>
<dbReference type="RefSeq" id="WP_010880702.1">
    <property type="nucleotide sequence ID" value="NC_000918.1"/>
</dbReference>
<dbReference type="STRING" id="224324.aq_1120"/>
<dbReference type="EnsemblBacteria" id="AAC07164">
    <property type="protein sequence ID" value="AAC07164"/>
    <property type="gene ID" value="aq_1120"/>
</dbReference>
<dbReference type="KEGG" id="aae:aq_1120"/>
<dbReference type="HOGENOM" id="CLU_1591203_0_0_0"/>
<dbReference type="InParanoid" id="O67200"/>
<dbReference type="Proteomes" id="UP000000798">
    <property type="component" value="Chromosome"/>
</dbReference>
<reference key="1">
    <citation type="journal article" date="1998" name="Nature">
        <title>The complete genome of the hyperthermophilic bacterium Aquifex aeolicus.</title>
        <authorList>
            <person name="Deckert G."/>
            <person name="Warren P.V."/>
            <person name="Gaasterland T."/>
            <person name="Young W.G."/>
            <person name="Lenox A.L."/>
            <person name="Graham D.E."/>
            <person name="Overbeek R."/>
            <person name="Snead M.A."/>
            <person name="Keller M."/>
            <person name="Aujay M."/>
            <person name="Huber R."/>
            <person name="Feldman R.A."/>
            <person name="Short J.M."/>
            <person name="Olsen G.J."/>
            <person name="Swanson R.V."/>
        </authorList>
    </citation>
    <scope>NUCLEOTIDE SEQUENCE [LARGE SCALE GENOMIC DNA]</scope>
    <source>
        <strain>VF5</strain>
    </source>
</reference>
<protein>
    <recommendedName>
        <fullName>Uncharacterized protein aq_1120</fullName>
    </recommendedName>
</protein>